<organism>
    <name type="scientific">Mycobacterium tuberculosis (strain CDC 1551 / Oshkosh)</name>
    <dbReference type="NCBI Taxonomy" id="83331"/>
    <lineage>
        <taxon>Bacteria</taxon>
        <taxon>Bacillati</taxon>
        <taxon>Actinomycetota</taxon>
        <taxon>Actinomycetes</taxon>
        <taxon>Mycobacteriales</taxon>
        <taxon>Mycobacteriaceae</taxon>
        <taxon>Mycobacterium</taxon>
        <taxon>Mycobacterium tuberculosis complex</taxon>
    </lineage>
</organism>
<accession>P9WNG8</accession>
<accession>L0TBC1</accession>
<accession>O53275</accession>
<dbReference type="EMBL" id="AE000516">
    <property type="protein sequence ID" value="AAK47442.1"/>
    <property type="molecule type" value="Genomic_DNA"/>
</dbReference>
<dbReference type="PIR" id="G70858">
    <property type="entry name" value="G70858"/>
</dbReference>
<dbReference type="RefSeq" id="WP_003899889.1">
    <property type="nucleotide sequence ID" value="NZ_KK341227.1"/>
</dbReference>
<dbReference type="SMR" id="P9WNG8"/>
<dbReference type="KEGG" id="mtc:MT3112"/>
<dbReference type="PATRIC" id="fig|83331.31.peg.3354"/>
<dbReference type="HOGENOM" id="CLU_034178_0_1_11"/>
<dbReference type="Proteomes" id="UP000001020">
    <property type="component" value="Chromosome"/>
</dbReference>
<dbReference type="GO" id="GO:0009055">
    <property type="term" value="F:electron transfer activity"/>
    <property type="evidence" value="ECO:0007669"/>
    <property type="project" value="InterPro"/>
</dbReference>
<dbReference type="GO" id="GO:0050660">
    <property type="term" value="F:flavin adenine dinucleotide binding"/>
    <property type="evidence" value="ECO:0007669"/>
    <property type="project" value="InterPro"/>
</dbReference>
<dbReference type="GO" id="GO:0033539">
    <property type="term" value="P:fatty acid beta-oxidation using acyl-CoA dehydrogenase"/>
    <property type="evidence" value="ECO:0007669"/>
    <property type="project" value="TreeGrafter"/>
</dbReference>
<dbReference type="CDD" id="cd01715">
    <property type="entry name" value="ETF_alpha"/>
    <property type="match status" value="1"/>
</dbReference>
<dbReference type="FunFam" id="3.40.50.1220:FF:000022">
    <property type="entry name" value="Electron transfer flavoprotein, alpha subunit"/>
    <property type="match status" value="1"/>
</dbReference>
<dbReference type="Gene3D" id="3.40.50.620">
    <property type="entry name" value="HUPs"/>
    <property type="match status" value="1"/>
</dbReference>
<dbReference type="Gene3D" id="3.40.50.1220">
    <property type="entry name" value="TPP-binding domain"/>
    <property type="match status" value="1"/>
</dbReference>
<dbReference type="InterPro" id="IPR029035">
    <property type="entry name" value="DHS-like_NAD/FAD-binding_dom"/>
</dbReference>
<dbReference type="InterPro" id="IPR014730">
    <property type="entry name" value="ETF_a/b_N"/>
</dbReference>
<dbReference type="InterPro" id="IPR001308">
    <property type="entry name" value="ETF_a/FixB"/>
</dbReference>
<dbReference type="InterPro" id="IPR033947">
    <property type="entry name" value="ETF_alpha_N"/>
</dbReference>
<dbReference type="InterPro" id="IPR014731">
    <property type="entry name" value="ETF_asu_C"/>
</dbReference>
<dbReference type="InterPro" id="IPR018206">
    <property type="entry name" value="ETF_asu_C_CS"/>
</dbReference>
<dbReference type="InterPro" id="IPR014729">
    <property type="entry name" value="Rossmann-like_a/b/a_fold"/>
</dbReference>
<dbReference type="PANTHER" id="PTHR43153">
    <property type="entry name" value="ELECTRON TRANSFER FLAVOPROTEIN ALPHA"/>
    <property type="match status" value="1"/>
</dbReference>
<dbReference type="PANTHER" id="PTHR43153:SF1">
    <property type="entry name" value="ELECTRON TRANSFER FLAVOPROTEIN SUBUNIT ALPHA, MITOCHONDRIAL"/>
    <property type="match status" value="1"/>
</dbReference>
<dbReference type="Pfam" id="PF01012">
    <property type="entry name" value="ETF"/>
    <property type="match status" value="1"/>
</dbReference>
<dbReference type="Pfam" id="PF00766">
    <property type="entry name" value="ETF_alpha"/>
    <property type="match status" value="1"/>
</dbReference>
<dbReference type="PIRSF" id="PIRSF000089">
    <property type="entry name" value="Electra_flavoP_a"/>
    <property type="match status" value="1"/>
</dbReference>
<dbReference type="SMART" id="SM00893">
    <property type="entry name" value="ETF"/>
    <property type="match status" value="1"/>
</dbReference>
<dbReference type="SUPFAM" id="SSF52402">
    <property type="entry name" value="Adenine nucleotide alpha hydrolases-like"/>
    <property type="match status" value="1"/>
</dbReference>
<dbReference type="SUPFAM" id="SSF52467">
    <property type="entry name" value="DHS-like NAD/FAD-binding domain"/>
    <property type="match status" value="1"/>
</dbReference>
<dbReference type="PROSITE" id="PS00696">
    <property type="entry name" value="ETF_ALPHA"/>
    <property type="match status" value="1"/>
</dbReference>
<proteinExistence type="inferred from homology"/>
<comment type="function">
    <text evidence="1">The electron transfer flavoprotein serves as a specific electron acceptor for other dehydrogenases. It transfers the electrons to the main respiratory chain via ETF-ubiquinone oxidoreductase (ETF dehydrogenase) (By similarity).</text>
</comment>
<comment type="cofactor">
    <cofactor evidence="1">
        <name>FAD</name>
        <dbReference type="ChEBI" id="CHEBI:57692"/>
    </cofactor>
    <text evidence="1">Binds 1 FAD per dimer.</text>
</comment>
<comment type="subunit">
    <text evidence="1">Heterodimer of an alpha and a beta subunit.</text>
</comment>
<comment type="similarity">
    <text evidence="3">Belongs to the ETF alpha-subunit/FixB family.</text>
</comment>
<reference key="1">
    <citation type="journal article" date="2002" name="J. Bacteriol.">
        <title>Whole-genome comparison of Mycobacterium tuberculosis clinical and laboratory strains.</title>
        <authorList>
            <person name="Fleischmann R.D."/>
            <person name="Alland D."/>
            <person name="Eisen J.A."/>
            <person name="Carpenter L."/>
            <person name="White O."/>
            <person name="Peterson J.D."/>
            <person name="DeBoy R.T."/>
            <person name="Dodson R.J."/>
            <person name="Gwinn M.L."/>
            <person name="Haft D.H."/>
            <person name="Hickey E.K."/>
            <person name="Kolonay J.F."/>
            <person name="Nelson W.C."/>
            <person name="Umayam L.A."/>
            <person name="Ermolaeva M.D."/>
            <person name="Salzberg S.L."/>
            <person name="Delcher A."/>
            <person name="Utterback T.R."/>
            <person name="Weidman J.F."/>
            <person name="Khouri H.M."/>
            <person name="Gill J."/>
            <person name="Mikula A."/>
            <person name="Bishai W."/>
            <person name="Jacobs W.R. Jr."/>
            <person name="Venter J.C."/>
            <person name="Fraser C.M."/>
        </authorList>
    </citation>
    <scope>NUCLEOTIDE SEQUENCE [LARGE SCALE GENOMIC DNA]</scope>
    <source>
        <strain>CDC 1551 / Oshkosh</strain>
    </source>
</reference>
<gene>
    <name type="primary">etfA</name>
    <name type="synonym">fixB</name>
    <name type="ordered locus">MT3112</name>
</gene>
<feature type="chain" id="PRO_0000427129" description="Electron transfer flavoprotein subunit alpha">
    <location>
        <begin position="1"/>
        <end position="318"/>
    </location>
</feature>
<feature type="binding site" evidence="2">
    <location>
        <begin position="257"/>
        <end position="285"/>
    </location>
    <ligand>
        <name>FAD</name>
        <dbReference type="ChEBI" id="CHEBI:57692"/>
    </ligand>
</feature>
<name>ETFA_MYCTO</name>
<evidence type="ECO:0000250" key="1"/>
<evidence type="ECO:0000255" key="2"/>
<evidence type="ECO:0000305" key="3"/>
<protein>
    <recommendedName>
        <fullName>Electron transfer flavoprotein subunit alpha</fullName>
        <shortName>Alpha-ETF</shortName>
    </recommendedName>
    <alternativeName>
        <fullName>Electron transfer flavoprotein large subunit</fullName>
        <shortName>ETFLS</shortName>
    </alternativeName>
</protein>
<keyword id="KW-0249">Electron transport</keyword>
<keyword id="KW-0274">FAD</keyword>
<keyword id="KW-0285">Flavoprotein</keyword>
<keyword id="KW-1185">Reference proteome</keyword>
<keyword id="KW-0813">Transport</keyword>
<sequence>MAEVLVLVEHAEGALKKVSAELITAARALGEPAAVVVGVPGTAAPLVDGLKAAGAAKIYVAESDLVDKYLITPAVDVLAGLAESSAPAGVLIAATADGKEIAGRLAARIGSGLLVDVVDVREGGVGVHSIFGGAFTVEAQANGDTPVITVRAGAVEAEPAAGAGEQVSVEVPAAAENAARITAREPAVAGDRPELTEATIVVAGGRGVGSAENFSVVEALADSLGAAVGASRAAVDSGYYPGQFQVGQTGKTVSPQLYIALGISGAIQHRAGMQTSKTIVAVNKDEEAPIFEIADYGVVGDLFKVAPQLTEAIKARKG</sequence>